<feature type="chain" id="PRO_0000091353" description="Elongation factor Tu">
    <location>
        <begin position="1"/>
        <end position="396"/>
    </location>
</feature>
<feature type="domain" description="tr-type G">
    <location>
        <begin position="10"/>
        <end position="205"/>
    </location>
</feature>
<feature type="region of interest" description="G1" evidence="1">
    <location>
        <begin position="19"/>
        <end position="26"/>
    </location>
</feature>
<feature type="region of interest" description="G2" evidence="1">
    <location>
        <begin position="62"/>
        <end position="66"/>
    </location>
</feature>
<feature type="region of interest" description="G3" evidence="1">
    <location>
        <begin position="83"/>
        <end position="86"/>
    </location>
</feature>
<feature type="region of interest" description="G4" evidence="1">
    <location>
        <begin position="138"/>
        <end position="141"/>
    </location>
</feature>
<feature type="region of interest" description="G5" evidence="1">
    <location>
        <begin position="175"/>
        <end position="177"/>
    </location>
</feature>
<feature type="binding site" evidence="2">
    <location>
        <begin position="19"/>
        <end position="26"/>
    </location>
    <ligand>
        <name>GTP</name>
        <dbReference type="ChEBI" id="CHEBI:37565"/>
    </ligand>
</feature>
<feature type="binding site" evidence="2">
    <location>
        <position position="26"/>
    </location>
    <ligand>
        <name>Mg(2+)</name>
        <dbReference type="ChEBI" id="CHEBI:18420"/>
    </ligand>
</feature>
<feature type="binding site" evidence="2">
    <location>
        <begin position="83"/>
        <end position="87"/>
    </location>
    <ligand>
        <name>GTP</name>
        <dbReference type="ChEBI" id="CHEBI:37565"/>
    </ligand>
</feature>
<feature type="binding site" evidence="2">
    <location>
        <begin position="138"/>
        <end position="141"/>
    </location>
    <ligand>
        <name>GTP</name>
        <dbReference type="ChEBI" id="CHEBI:37565"/>
    </ligand>
</feature>
<feature type="strand" evidence="4">
    <location>
        <begin position="12"/>
        <end position="19"/>
    </location>
</feature>
<feature type="helix" evidence="4">
    <location>
        <begin position="21"/>
        <end position="23"/>
    </location>
</feature>
<feature type="helix" evidence="4">
    <location>
        <begin position="25"/>
        <end position="39"/>
    </location>
</feature>
<feature type="strand" evidence="5">
    <location>
        <begin position="41"/>
        <end position="43"/>
    </location>
</feature>
<feature type="helix" evidence="5">
    <location>
        <begin position="49"/>
        <end position="53"/>
    </location>
</feature>
<feature type="strand" evidence="5">
    <location>
        <begin position="57"/>
        <end position="60"/>
    </location>
</feature>
<feature type="strand" evidence="5">
    <location>
        <begin position="63"/>
        <end position="66"/>
    </location>
</feature>
<feature type="strand" evidence="4">
    <location>
        <begin position="71"/>
        <end position="73"/>
    </location>
</feature>
<feature type="strand" evidence="4">
    <location>
        <begin position="78"/>
        <end position="83"/>
    </location>
</feature>
<feature type="helix" evidence="4">
    <location>
        <begin position="87"/>
        <end position="95"/>
    </location>
</feature>
<feature type="strand" evidence="4">
    <location>
        <begin position="102"/>
        <end position="109"/>
    </location>
</feature>
<feature type="turn" evidence="4">
    <location>
        <begin position="110"/>
        <end position="112"/>
    </location>
</feature>
<feature type="helix" evidence="4">
    <location>
        <begin position="118"/>
        <end position="128"/>
    </location>
</feature>
<feature type="strand" evidence="4">
    <location>
        <begin position="133"/>
        <end position="138"/>
    </location>
</feature>
<feature type="helix" evidence="4">
    <location>
        <begin position="140"/>
        <end position="142"/>
    </location>
</feature>
<feature type="helix" evidence="4">
    <location>
        <begin position="146"/>
        <end position="162"/>
    </location>
</feature>
<feature type="strand" evidence="5">
    <location>
        <begin position="167"/>
        <end position="169"/>
    </location>
</feature>
<feature type="strand" evidence="4">
    <location>
        <begin position="171"/>
        <end position="173"/>
    </location>
</feature>
<feature type="helix" evidence="4">
    <location>
        <begin position="176"/>
        <end position="181"/>
    </location>
</feature>
<feature type="helix" evidence="4">
    <location>
        <begin position="184"/>
        <end position="200"/>
    </location>
</feature>
<feature type="helix" evidence="4">
    <location>
        <begin position="207"/>
        <end position="209"/>
    </location>
</feature>
<feature type="strand" evidence="4">
    <location>
        <begin position="213"/>
        <end position="222"/>
    </location>
</feature>
<feature type="turn" evidence="4">
    <location>
        <begin position="223"/>
        <end position="225"/>
    </location>
</feature>
<feature type="strand" evidence="4">
    <location>
        <begin position="226"/>
        <end position="232"/>
    </location>
</feature>
<feature type="strand" evidence="4">
    <location>
        <begin position="235"/>
        <end position="239"/>
    </location>
</feature>
<feature type="strand" evidence="4">
    <location>
        <begin position="243"/>
        <end position="252"/>
    </location>
</feature>
<feature type="strand" evidence="4">
    <location>
        <begin position="254"/>
        <end position="263"/>
    </location>
</feature>
<feature type="strand" evidence="4">
    <location>
        <begin position="266"/>
        <end position="272"/>
    </location>
</feature>
<feature type="strand" evidence="4">
    <location>
        <begin position="276"/>
        <end position="281"/>
    </location>
</feature>
<feature type="helix" evidence="4">
    <location>
        <begin position="286"/>
        <end position="288"/>
    </location>
</feature>
<feature type="strand" evidence="4">
    <location>
        <begin position="294"/>
        <end position="297"/>
    </location>
</feature>
<feature type="turn" evidence="5">
    <location>
        <begin position="298"/>
        <end position="300"/>
    </location>
</feature>
<feature type="strand" evidence="4">
    <location>
        <begin position="303"/>
        <end position="313"/>
    </location>
</feature>
<feature type="helix" evidence="4">
    <location>
        <begin position="316"/>
        <end position="318"/>
    </location>
</feature>
<feature type="strand" evidence="5">
    <location>
        <begin position="332"/>
        <end position="334"/>
    </location>
</feature>
<feature type="turn" evidence="4">
    <location>
        <begin position="335"/>
        <end position="337"/>
    </location>
</feature>
<feature type="strand" evidence="4">
    <location>
        <begin position="340"/>
        <end position="345"/>
    </location>
</feature>
<feature type="strand" evidence="4">
    <location>
        <begin position="358"/>
        <end position="370"/>
    </location>
</feature>
<feature type="strand" evidence="4">
    <location>
        <begin position="376"/>
        <end position="381"/>
    </location>
</feature>
<feature type="strand" evidence="4">
    <location>
        <begin position="384"/>
        <end position="395"/>
    </location>
</feature>
<name>EFTU_MYCTU</name>
<accession>P9WNN1</accession>
<accession>L0T782</accession>
<accession>P0A558</accession>
<accession>P31501</accession>
<accession>P95031</accession>
<accession>Q50823</accession>
<keyword id="KW-0002">3D-structure</keyword>
<keyword id="KW-0963">Cytoplasm</keyword>
<keyword id="KW-0251">Elongation factor</keyword>
<keyword id="KW-0342">GTP-binding</keyword>
<keyword id="KW-0378">Hydrolase</keyword>
<keyword id="KW-0460">Magnesium</keyword>
<keyword id="KW-0479">Metal-binding</keyword>
<keyword id="KW-0547">Nucleotide-binding</keyword>
<keyword id="KW-0648">Protein biosynthesis</keyword>
<keyword id="KW-1185">Reference proteome</keyword>
<evidence type="ECO:0000250" key="1"/>
<evidence type="ECO:0000255" key="2">
    <source>
        <dbReference type="HAMAP-Rule" id="MF_00118"/>
    </source>
</evidence>
<evidence type="ECO:0000305" key="3"/>
<evidence type="ECO:0007829" key="4">
    <source>
        <dbReference type="PDB" id="7VMX"/>
    </source>
</evidence>
<evidence type="ECO:0007829" key="5">
    <source>
        <dbReference type="PDB" id="7VOK"/>
    </source>
</evidence>
<comment type="function">
    <text evidence="2">GTP hydrolase that promotes the GTP-dependent binding of aminoacyl-tRNA to the A-site of ribosomes during protein biosynthesis.</text>
</comment>
<comment type="catalytic activity">
    <reaction evidence="2">
        <text>GTP + H2O = GDP + phosphate + H(+)</text>
        <dbReference type="Rhea" id="RHEA:19669"/>
        <dbReference type="ChEBI" id="CHEBI:15377"/>
        <dbReference type="ChEBI" id="CHEBI:15378"/>
        <dbReference type="ChEBI" id="CHEBI:37565"/>
        <dbReference type="ChEBI" id="CHEBI:43474"/>
        <dbReference type="ChEBI" id="CHEBI:58189"/>
        <dbReference type="EC" id="3.6.5.3"/>
    </reaction>
    <physiologicalReaction direction="left-to-right" evidence="2">
        <dbReference type="Rhea" id="RHEA:19670"/>
    </physiologicalReaction>
</comment>
<comment type="subunit">
    <text evidence="2">Monomer.</text>
</comment>
<comment type="subcellular location">
    <subcellularLocation>
        <location evidence="2">Cytoplasm</location>
    </subcellularLocation>
</comment>
<comment type="similarity">
    <text evidence="2">Belongs to the TRAFAC class translation factor GTPase superfamily. Classic translation factor GTPase family. EF-Tu/EF-1A subfamily.</text>
</comment>
<comment type="sequence caution" evidence="3">
    <conflict type="erroneous initiation">
        <sequence resource="EMBL-CDS" id="CAA45101"/>
    </conflict>
</comment>
<gene>
    <name evidence="2" type="primary">tuf</name>
    <name type="ordered locus">Rv0685</name>
    <name type="ORF">MTCY210.02</name>
</gene>
<protein>
    <recommendedName>
        <fullName evidence="2">Elongation factor Tu</fullName>
        <shortName evidence="2">EF-Tu</shortName>
        <ecNumber evidence="2">3.6.5.3</ecNumber>
    </recommendedName>
</protein>
<sequence length="396" mass="43594">MAKAKFQRTKPHVNIGTIGHVDHGKTTLTAAITKVLHDKFPDLNETKAFDQIDNAPEERQRGITINIAHVEYQTDKRHYAHVDAPGHADYIKNMITGAAQMDGAILVVAATDGPMPQTREHVLLARQVGVPYILVALNKADAVDDEELLELVEMEVRELLAAQEFDEDAPVVRVSALKALEGDAKWVASVEELMNAVDESIPDPVRETDKPFLMPVEDVFTITGRGTVVTGRVERGVINVNEEVEIVGIRPSTTKTTVTGVEMFRKLLDQGQAGDNVGLLLRGVKREDVERGQVVTKPGTTTPHTEFEGQVYILSKDEGGRHTPFFNNYRPQFYFRTTDVTGVVTLPEGTEMVMPGDNTNISVKLIQPVAMDEGLRFAIREGGRTVGAGRVTKIIK</sequence>
<proteinExistence type="evidence at protein level"/>
<dbReference type="EC" id="3.6.5.3" evidence="2"/>
<dbReference type="EMBL" id="X63539">
    <property type="protein sequence ID" value="CAA45102.1"/>
    <property type="molecule type" value="Genomic_DNA"/>
</dbReference>
<dbReference type="EMBL" id="X63539">
    <property type="protein sequence ID" value="CAA45101.1"/>
    <property type="status" value="ALT_INIT"/>
    <property type="molecule type" value="Genomic_DNA"/>
</dbReference>
<dbReference type="EMBL" id="AL123456">
    <property type="protein sequence ID" value="CCP43428.1"/>
    <property type="molecule type" value="Genomic_DNA"/>
</dbReference>
<dbReference type="PIR" id="A44795">
    <property type="entry name" value="A44795"/>
</dbReference>
<dbReference type="RefSeq" id="NP_215199.1">
    <property type="nucleotide sequence ID" value="NC_000962.3"/>
</dbReference>
<dbReference type="RefSeq" id="WP_003403463.1">
    <property type="nucleotide sequence ID" value="NZ_NVQJ01000007.1"/>
</dbReference>
<dbReference type="PDB" id="7VMX">
    <property type="method" value="X-ray"/>
    <property type="resolution" value="2.80 A"/>
    <property type="chains" value="B=1-396"/>
</dbReference>
<dbReference type="PDB" id="7VOK">
    <property type="method" value="X-ray"/>
    <property type="resolution" value="3.40 A"/>
    <property type="chains" value="A/B/C/D=1-396"/>
</dbReference>
<dbReference type="PDBsum" id="7VMX"/>
<dbReference type="PDBsum" id="7VOK"/>
<dbReference type="SASBDB" id="P9WNN1"/>
<dbReference type="SMR" id="P9WNN1"/>
<dbReference type="FunCoup" id="P9WNN1">
    <property type="interactions" value="446"/>
</dbReference>
<dbReference type="STRING" id="83332.Rv0685"/>
<dbReference type="PaxDb" id="83332-Rv0685"/>
<dbReference type="DNASU" id="888262"/>
<dbReference type="GeneID" id="45424647"/>
<dbReference type="GeneID" id="888262"/>
<dbReference type="KEGG" id="mtu:Rv0685"/>
<dbReference type="KEGG" id="mtv:RVBD_0685"/>
<dbReference type="TubercuList" id="Rv0685"/>
<dbReference type="eggNOG" id="COG0050">
    <property type="taxonomic scope" value="Bacteria"/>
</dbReference>
<dbReference type="InParanoid" id="P9WNN1"/>
<dbReference type="OrthoDB" id="9803139at2"/>
<dbReference type="PhylomeDB" id="P9WNN1"/>
<dbReference type="Proteomes" id="UP000001584">
    <property type="component" value="Chromosome"/>
</dbReference>
<dbReference type="GO" id="GO:0005829">
    <property type="term" value="C:cytosol"/>
    <property type="evidence" value="ECO:0007005"/>
    <property type="project" value="MTBBASE"/>
</dbReference>
<dbReference type="GO" id="GO:0005576">
    <property type="term" value="C:extracellular region"/>
    <property type="evidence" value="ECO:0000314"/>
    <property type="project" value="CAFA"/>
</dbReference>
<dbReference type="GO" id="GO:0009274">
    <property type="term" value="C:peptidoglycan-based cell wall"/>
    <property type="evidence" value="ECO:0007005"/>
    <property type="project" value="MTBBASE"/>
</dbReference>
<dbReference type="GO" id="GO:0005886">
    <property type="term" value="C:plasma membrane"/>
    <property type="evidence" value="ECO:0007005"/>
    <property type="project" value="MTBBASE"/>
</dbReference>
<dbReference type="GO" id="GO:0005525">
    <property type="term" value="F:GTP binding"/>
    <property type="evidence" value="ECO:0007669"/>
    <property type="project" value="UniProtKB-UniRule"/>
</dbReference>
<dbReference type="GO" id="GO:0003924">
    <property type="term" value="F:GTPase activity"/>
    <property type="evidence" value="ECO:0007669"/>
    <property type="project" value="InterPro"/>
</dbReference>
<dbReference type="GO" id="GO:0003746">
    <property type="term" value="F:translation elongation factor activity"/>
    <property type="evidence" value="ECO:0000318"/>
    <property type="project" value="GO_Central"/>
</dbReference>
<dbReference type="GO" id="GO:0035375">
    <property type="term" value="F:zymogen binding"/>
    <property type="evidence" value="ECO:0000353"/>
    <property type="project" value="CAFA"/>
</dbReference>
<dbReference type="GO" id="GO:0001666">
    <property type="term" value="P:response to hypoxia"/>
    <property type="evidence" value="ECO:0000270"/>
    <property type="project" value="MTBBASE"/>
</dbReference>
<dbReference type="GO" id="GO:0010039">
    <property type="term" value="P:response to iron ion"/>
    <property type="evidence" value="ECO:0000270"/>
    <property type="project" value="MTBBASE"/>
</dbReference>
<dbReference type="GO" id="GO:0006414">
    <property type="term" value="P:translational elongation"/>
    <property type="evidence" value="ECO:0000318"/>
    <property type="project" value="GO_Central"/>
</dbReference>
<dbReference type="CDD" id="cd01884">
    <property type="entry name" value="EF_Tu"/>
    <property type="match status" value="1"/>
</dbReference>
<dbReference type="CDD" id="cd03697">
    <property type="entry name" value="EFTU_II"/>
    <property type="match status" value="1"/>
</dbReference>
<dbReference type="CDD" id="cd03707">
    <property type="entry name" value="EFTU_III"/>
    <property type="match status" value="1"/>
</dbReference>
<dbReference type="FunFam" id="2.40.30.10:FF:000001">
    <property type="entry name" value="Elongation factor Tu"/>
    <property type="match status" value="1"/>
</dbReference>
<dbReference type="FunFam" id="3.40.50.300:FF:000003">
    <property type="entry name" value="Elongation factor Tu"/>
    <property type="match status" value="1"/>
</dbReference>
<dbReference type="Gene3D" id="3.40.50.300">
    <property type="entry name" value="P-loop containing nucleotide triphosphate hydrolases"/>
    <property type="match status" value="1"/>
</dbReference>
<dbReference type="Gene3D" id="2.40.30.10">
    <property type="entry name" value="Translation factors"/>
    <property type="match status" value="2"/>
</dbReference>
<dbReference type="HAMAP" id="MF_00118_B">
    <property type="entry name" value="EF_Tu_B"/>
    <property type="match status" value="1"/>
</dbReference>
<dbReference type="InterPro" id="IPR041709">
    <property type="entry name" value="EF-Tu_GTP-bd"/>
</dbReference>
<dbReference type="InterPro" id="IPR050055">
    <property type="entry name" value="EF-Tu_GTPase"/>
</dbReference>
<dbReference type="InterPro" id="IPR004161">
    <property type="entry name" value="EFTu-like_2"/>
</dbReference>
<dbReference type="InterPro" id="IPR033720">
    <property type="entry name" value="EFTU_2"/>
</dbReference>
<dbReference type="InterPro" id="IPR031157">
    <property type="entry name" value="G_TR_CS"/>
</dbReference>
<dbReference type="InterPro" id="IPR027417">
    <property type="entry name" value="P-loop_NTPase"/>
</dbReference>
<dbReference type="InterPro" id="IPR005225">
    <property type="entry name" value="Small_GTP-bd"/>
</dbReference>
<dbReference type="InterPro" id="IPR000795">
    <property type="entry name" value="T_Tr_GTP-bd_dom"/>
</dbReference>
<dbReference type="InterPro" id="IPR009000">
    <property type="entry name" value="Transl_B-barrel_sf"/>
</dbReference>
<dbReference type="InterPro" id="IPR009001">
    <property type="entry name" value="Transl_elong_EF1A/Init_IF2_C"/>
</dbReference>
<dbReference type="InterPro" id="IPR004541">
    <property type="entry name" value="Transl_elong_EFTu/EF1A_bac/org"/>
</dbReference>
<dbReference type="InterPro" id="IPR004160">
    <property type="entry name" value="Transl_elong_EFTu/EF1A_C"/>
</dbReference>
<dbReference type="NCBIfam" id="TIGR00485">
    <property type="entry name" value="EF-Tu"/>
    <property type="match status" value="1"/>
</dbReference>
<dbReference type="NCBIfam" id="NF000766">
    <property type="entry name" value="PRK00049.1"/>
    <property type="match status" value="1"/>
</dbReference>
<dbReference type="NCBIfam" id="NF009372">
    <property type="entry name" value="PRK12735.1"/>
    <property type="match status" value="1"/>
</dbReference>
<dbReference type="NCBIfam" id="NF009373">
    <property type="entry name" value="PRK12736.1"/>
    <property type="match status" value="1"/>
</dbReference>
<dbReference type="NCBIfam" id="TIGR00231">
    <property type="entry name" value="small_GTP"/>
    <property type="match status" value="1"/>
</dbReference>
<dbReference type="PANTHER" id="PTHR43721:SF22">
    <property type="entry name" value="ELONGATION FACTOR TU, MITOCHONDRIAL"/>
    <property type="match status" value="1"/>
</dbReference>
<dbReference type="PANTHER" id="PTHR43721">
    <property type="entry name" value="ELONGATION FACTOR TU-RELATED"/>
    <property type="match status" value="1"/>
</dbReference>
<dbReference type="Pfam" id="PF00009">
    <property type="entry name" value="GTP_EFTU"/>
    <property type="match status" value="1"/>
</dbReference>
<dbReference type="Pfam" id="PF03144">
    <property type="entry name" value="GTP_EFTU_D2"/>
    <property type="match status" value="1"/>
</dbReference>
<dbReference type="Pfam" id="PF03143">
    <property type="entry name" value="GTP_EFTU_D3"/>
    <property type="match status" value="1"/>
</dbReference>
<dbReference type="PRINTS" id="PR00315">
    <property type="entry name" value="ELONGATNFCT"/>
</dbReference>
<dbReference type="SUPFAM" id="SSF50465">
    <property type="entry name" value="EF-Tu/eEF-1alpha/eIF2-gamma C-terminal domain"/>
    <property type="match status" value="1"/>
</dbReference>
<dbReference type="SUPFAM" id="SSF52540">
    <property type="entry name" value="P-loop containing nucleoside triphosphate hydrolases"/>
    <property type="match status" value="1"/>
</dbReference>
<dbReference type="SUPFAM" id="SSF50447">
    <property type="entry name" value="Translation proteins"/>
    <property type="match status" value="1"/>
</dbReference>
<dbReference type="PROSITE" id="PS00301">
    <property type="entry name" value="G_TR_1"/>
    <property type="match status" value="1"/>
</dbReference>
<dbReference type="PROSITE" id="PS51722">
    <property type="entry name" value="G_TR_2"/>
    <property type="match status" value="1"/>
</dbReference>
<organism>
    <name type="scientific">Mycobacterium tuberculosis (strain ATCC 25618 / H37Rv)</name>
    <dbReference type="NCBI Taxonomy" id="83332"/>
    <lineage>
        <taxon>Bacteria</taxon>
        <taxon>Bacillati</taxon>
        <taxon>Actinomycetota</taxon>
        <taxon>Actinomycetes</taxon>
        <taxon>Mycobacteriales</taxon>
        <taxon>Mycobacteriaceae</taxon>
        <taxon>Mycobacterium</taxon>
        <taxon>Mycobacterium tuberculosis complex</taxon>
    </lineage>
</organism>
<reference key="1">
    <citation type="journal article" date="1992" name="Infect. Immun.">
        <title>Monoclonal antibodies specific for elongation factor Tu and complete nucleotide sequence of the tuf gene in Mycobacterium tuberculosis.</title>
        <authorList>
            <person name="Carlin N.I.A."/>
            <person name="Loefdahl S."/>
            <person name="Magnusson M."/>
        </authorList>
    </citation>
    <scope>NUCLEOTIDE SEQUENCE [GENOMIC DNA]</scope>
    <source>
        <strain>ATCC 35801 / TMC 107 / Erdman</strain>
    </source>
</reference>
<reference key="2">
    <citation type="journal article" date="1998" name="Nature">
        <title>Deciphering the biology of Mycobacterium tuberculosis from the complete genome sequence.</title>
        <authorList>
            <person name="Cole S.T."/>
            <person name="Brosch R."/>
            <person name="Parkhill J."/>
            <person name="Garnier T."/>
            <person name="Churcher C.M."/>
            <person name="Harris D.E."/>
            <person name="Gordon S.V."/>
            <person name="Eiglmeier K."/>
            <person name="Gas S."/>
            <person name="Barry C.E. III"/>
            <person name="Tekaia F."/>
            <person name="Badcock K."/>
            <person name="Basham D."/>
            <person name="Brown D."/>
            <person name="Chillingworth T."/>
            <person name="Connor R."/>
            <person name="Davies R.M."/>
            <person name="Devlin K."/>
            <person name="Feltwell T."/>
            <person name="Gentles S."/>
            <person name="Hamlin N."/>
            <person name="Holroyd S."/>
            <person name="Hornsby T."/>
            <person name="Jagels K."/>
            <person name="Krogh A."/>
            <person name="McLean J."/>
            <person name="Moule S."/>
            <person name="Murphy L.D."/>
            <person name="Oliver S."/>
            <person name="Osborne J."/>
            <person name="Quail M.A."/>
            <person name="Rajandream M.A."/>
            <person name="Rogers J."/>
            <person name="Rutter S."/>
            <person name="Seeger K."/>
            <person name="Skelton S."/>
            <person name="Squares S."/>
            <person name="Squares R."/>
            <person name="Sulston J.E."/>
            <person name="Taylor K."/>
            <person name="Whitehead S."/>
            <person name="Barrell B.G."/>
        </authorList>
    </citation>
    <scope>NUCLEOTIDE SEQUENCE [LARGE SCALE GENOMIC DNA]</scope>
    <source>
        <strain>ATCC 25618 / H37Rv</strain>
    </source>
</reference>
<reference key="3">
    <citation type="journal article" date="2011" name="Mol. Cell. Proteomics">
        <title>Proteogenomic analysis of Mycobacterium tuberculosis by high resolution mass spectrometry.</title>
        <authorList>
            <person name="Kelkar D.S."/>
            <person name="Kumar D."/>
            <person name="Kumar P."/>
            <person name="Balakrishnan L."/>
            <person name="Muthusamy B."/>
            <person name="Yadav A.K."/>
            <person name="Shrivastava P."/>
            <person name="Marimuthu A."/>
            <person name="Anand S."/>
            <person name="Sundaram H."/>
            <person name="Kingsbury R."/>
            <person name="Harsha H.C."/>
            <person name="Nair B."/>
            <person name="Prasad T.S."/>
            <person name="Chauhan D.S."/>
            <person name="Katoch K."/>
            <person name="Katoch V.M."/>
            <person name="Kumar P."/>
            <person name="Chaerkady R."/>
            <person name="Ramachandran S."/>
            <person name="Dash D."/>
            <person name="Pandey A."/>
        </authorList>
    </citation>
    <scope>IDENTIFICATION BY MASS SPECTROMETRY [LARGE SCALE ANALYSIS]</scope>
    <source>
        <strain>ATCC 25618 / H37Rv</strain>
    </source>
</reference>